<accession>P10428</accession>
<evidence type="ECO:0000256" key="1">
    <source>
        <dbReference type="SAM" id="MobiDB-lite"/>
    </source>
</evidence>
<proteinExistence type="predicted"/>
<name>YIM4_BPPH1</name>
<organism>
    <name type="scientific">Bacillus phage phi105</name>
    <name type="common">Bacteriophage phi-105</name>
    <dbReference type="NCBI Taxonomy" id="10717"/>
    <lineage>
        <taxon>Viruses</taxon>
        <taxon>Duplodnaviria</taxon>
        <taxon>Heunggongvirae</taxon>
        <taxon>Uroviricota</taxon>
        <taxon>Caudoviricetes</taxon>
        <taxon>Spizizenvirus</taxon>
        <taxon>Spizizenvirus sv105</taxon>
    </lineage>
</organism>
<dbReference type="EMBL" id="M11920">
    <property type="protein sequence ID" value="AAA88401.1"/>
    <property type="molecule type" value="Genomic_DNA"/>
</dbReference>
<dbReference type="SMR" id="P10428"/>
<reference key="1">
    <citation type="journal article" date="1985" name="Gene">
        <title>Nucleotide sequence of the immunity region of Bacillus subtilis bacteriophage phi 105: identification of the repressor gene and its mRNA and protein products.</title>
        <authorList>
            <person name="Cully D.F."/>
            <person name="Garro A.J."/>
        </authorList>
    </citation>
    <scope>NUCLEOTIDE SEQUENCE [GENOMIC DNA]</scope>
</reference>
<feature type="chain" id="PRO_0000077722" description="Uncharacterized immunity region protein 4">
    <location>
        <begin position="1"/>
        <end position="37"/>
    </location>
</feature>
<feature type="region of interest" description="Disordered" evidence="1">
    <location>
        <begin position="1"/>
        <end position="37"/>
    </location>
</feature>
<feature type="compositionally biased region" description="Basic residues" evidence="1">
    <location>
        <begin position="23"/>
        <end position="37"/>
    </location>
</feature>
<protein>
    <recommendedName>
        <fullName>Uncharacterized immunity region protein 4</fullName>
    </recommendedName>
</protein>
<sequence>MGQVEKARQGQFARPHHSDSQRRVRAWSRIQRRARSF</sequence>
<organismHost>
    <name type="scientific">Bacillus subtilis</name>
    <dbReference type="NCBI Taxonomy" id="1423"/>
</organismHost>